<name>PTPA_MYCTO</name>
<accession>P9WIA0</accession>
<accession>L0TAK9</accession>
<accession>P65716</accession>
<accession>Q10507</accession>
<dbReference type="EC" id="3.1.3.48" evidence="1"/>
<dbReference type="EMBL" id="AE000516">
    <property type="protein sequence ID" value="AAK46577.1"/>
    <property type="molecule type" value="Genomic_DNA"/>
</dbReference>
<dbReference type="PIR" id="F70777">
    <property type="entry name" value="F70777"/>
</dbReference>
<dbReference type="RefSeq" id="WP_003411510.1">
    <property type="nucleotide sequence ID" value="NZ_KK341227.1"/>
</dbReference>
<dbReference type="BMRB" id="P9WIA0"/>
<dbReference type="SMR" id="P9WIA0"/>
<dbReference type="GeneID" id="45426212"/>
<dbReference type="KEGG" id="mtc:MT2293"/>
<dbReference type="PATRIC" id="fig|83331.31.peg.2470"/>
<dbReference type="HOGENOM" id="CLU_071415_2_1_11"/>
<dbReference type="Proteomes" id="UP000001020">
    <property type="component" value="Chromosome"/>
</dbReference>
<dbReference type="GO" id="GO:0004725">
    <property type="term" value="F:protein tyrosine phosphatase activity"/>
    <property type="evidence" value="ECO:0007669"/>
    <property type="project" value="UniProtKB-EC"/>
</dbReference>
<dbReference type="CDD" id="cd16343">
    <property type="entry name" value="LMWPTP"/>
    <property type="match status" value="1"/>
</dbReference>
<dbReference type="Gene3D" id="3.40.50.2300">
    <property type="match status" value="1"/>
</dbReference>
<dbReference type="InterPro" id="IPR050438">
    <property type="entry name" value="LMW_PTPase"/>
</dbReference>
<dbReference type="InterPro" id="IPR023485">
    <property type="entry name" value="Ptyr_pPase"/>
</dbReference>
<dbReference type="InterPro" id="IPR036196">
    <property type="entry name" value="Ptyr_pPase_sf"/>
</dbReference>
<dbReference type="InterPro" id="IPR017867">
    <property type="entry name" value="Tyr_phospatase_low_mol_wt"/>
</dbReference>
<dbReference type="PANTHER" id="PTHR11717:SF7">
    <property type="entry name" value="LOW MOLECULAR WEIGHT PHOSPHOTYROSINE PROTEIN PHOSPHATASE"/>
    <property type="match status" value="1"/>
</dbReference>
<dbReference type="PANTHER" id="PTHR11717">
    <property type="entry name" value="LOW MOLECULAR WEIGHT PROTEIN TYROSINE PHOSPHATASE"/>
    <property type="match status" value="1"/>
</dbReference>
<dbReference type="Pfam" id="PF01451">
    <property type="entry name" value="LMWPc"/>
    <property type="match status" value="1"/>
</dbReference>
<dbReference type="PRINTS" id="PR00719">
    <property type="entry name" value="LMWPTPASE"/>
</dbReference>
<dbReference type="SMART" id="SM00226">
    <property type="entry name" value="LMWPc"/>
    <property type="match status" value="1"/>
</dbReference>
<dbReference type="SUPFAM" id="SSF52788">
    <property type="entry name" value="Phosphotyrosine protein phosphatases I"/>
    <property type="match status" value="1"/>
</dbReference>
<sequence>MSDPLHVTFVCTGNICRSPMAEKMFAQQLRHRGLGDAVRVTSAGTGNWHVGSCADERAAGVLRAHGYPTDHRAAQVGTEHLAADLLVALDRNHARLLRQLGVEAARVRMLRSFDPRSGTHALDVEDPYYGDHSDFEEVFAVIESALPGLHDWVDERLARNGPS</sequence>
<feature type="chain" id="PRO_0000428043" description="Low molecular weight protein-tyrosine phosphatase A">
    <location>
        <begin position="1"/>
        <end position="163"/>
    </location>
</feature>
<feature type="active site" description="Nucleophile" evidence="1">
    <location>
        <position position="11"/>
    </location>
</feature>
<feature type="active site" evidence="1">
    <location>
        <position position="17"/>
    </location>
</feature>
<feature type="active site" description="Proton donor" evidence="1">
    <location>
        <position position="126"/>
    </location>
</feature>
<proteinExistence type="inferred from homology"/>
<organism>
    <name type="scientific">Mycobacterium tuberculosis (strain CDC 1551 / Oshkosh)</name>
    <dbReference type="NCBI Taxonomy" id="83331"/>
    <lineage>
        <taxon>Bacteria</taxon>
        <taxon>Bacillati</taxon>
        <taxon>Actinomycetota</taxon>
        <taxon>Actinomycetes</taxon>
        <taxon>Mycobacteriales</taxon>
        <taxon>Mycobacteriaceae</taxon>
        <taxon>Mycobacterium</taxon>
        <taxon>Mycobacterium tuberculosis complex</taxon>
    </lineage>
</organism>
<keyword id="KW-0378">Hydrolase</keyword>
<keyword id="KW-0904">Protein phosphatase</keyword>
<keyword id="KW-1185">Reference proteome</keyword>
<keyword id="KW-0843">Virulence</keyword>
<gene>
    <name type="primary">ptpA</name>
    <name type="ordered locus">MT2293</name>
</gene>
<evidence type="ECO:0000250" key="1">
    <source>
        <dbReference type="UniProtKB" id="P9WIA1"/>
    </source>
</evidence>
<evidence type="ECO:0000305" key="2"/>
<comment type="function">
    <text evidence="1">Key virulence factor required for mycobacterial survival within host macrophages (By similarity). Exhibits protein tyrosine phosphatase activity (By similarity).</text>
</comment>
<comment type="function">
    <text evidence="1">Supports mycobacteria survival during infection by modulation of the phagosome maturation and modulation of the normal host signaling pathways, including host innate immune responses and cell apoptosis.</text>
</comment>
<comment type="catalytic activity">
    <reaction evidence="1">
        <text>O-phospho-L-tyrosyl-[protein] + H2O = L-tyrosyl-[protein] + phosphate</text>
        <dbReference type="Rhea" id="RHEA:10684"/>
        <dbReference type="Rhea" id="RHEA-COMP:10136"/>
        <dbReference type="Rhea" id="RHEA-COMP:20101"/>
        <dbReference type="ChEBI" id="CHEBI:15377"/>
        <dbReference type="ChEBI" id="CHEBI:43474"/>
        <dbReference type="ChEBI" id="CHEBI:46858"/>
        <dbReference type="ChEBI" id="CHEBI:61978"/>
        <dbReference type="EC" id="3.1.3.48"/>
    </reaction>
    <physiologicalReaction direction="left-to-right" evidence="1">
        <dbReference type="Rhea" id="RHEA:10685"/>
    </physiologicalReaction>
</comment>
<comment type="similarity">
    <text evidence="2">Belongs to the low molecular weight phosphotyrosine protein phosphatase family.</text>
</comment>
<reference key="1">
    <citation type="journal article" date="2002" name="J. Bacteriol.">
        <title>Whole-genome comparison of Mycobacterium tuberculosis clinical and laboratory strains.</title>
        <authorList>
            <person name="Fleischmann R.D."/>
            <person name="Alland D."/>
            <person name="Eisen J.A."/>
            <person name="Carpenter L."/>
            <person name="White O."/>
            <person name="Peterson J.D."/>
            <person name="DeBoy R.T."/>
            <person name="Dodson R.J."/>
            <person name="Gwinn M.L."/>
            <person name="Haft D.H."/>
            <person name="Hickey E.K."/>
            <person name="Kolonay J.F."/>
            <person name="Nelson W.C."/>
            <person name="Umayam L.A."/>
            <person name="Ermolaeva M.D."/>
            <person name="Salzberg S.L."/>
            <person name="Delcher A."/>
            <person name="Utterback T.R."/>
            <person name="Weidman J.F."/>
            <person name="Khouri H.M."/>
            <person name="Gill J."/>
            <person name="Mikula A."/>
            <person name="Bishai W."/>
            <person name="Jacobs W.R. Jr."/>
            <person name="Venter J.C."/>
            <person name="Fraser C.M."/>
        </authorList>
    </citation>
    <scope>NUCLEOTIDE SEQUENCE [LARGE SCALE GENOMIC DNA]</scope>
    <source>
        <strain>CDC 1551 / Oshkosh</strain>
    </source>
</reference>
<protein>
    <recommendedName>
        <fullName evidence="1">Low molecular weight protein-tyrosine phosphatase A</fullName>
        <shortName evidence="1">LMW-PTP</shortName>
        <shortName evidence="1">PTPase</shortName>
        <ecNumber evidence="1">3.1.3.48</ecNumber>
    </recommendedName>
    <alternativeName>
        <fullName evidence="1">Low molecular weight tyrosine phosphatase PtpA</fullName>
    </alternativeName>
</protein>